<gene>
    <name type="primary">itgbl1</name>
</gene>
<dbReference type="EMBL" id="BC087328">
    <property type="protein sequence ID" value="AAH87328.1"/>
    <property type="molecule type" value="mRNA"/>
</dbReference>
<dbReference type="EMBL" id="BC046744">
    <property type="protein sequence ID" value="AAH46744.1"/>
    <property type="status" value="ALT_INIT"/>
    <property type="molecule type" value="mRNA"/>
</dbReference>
<dbReference type="RefSeq" id="NP_001084310.1">
    <property type="nucleotide sequence ID" value="NM_001090841.1"/>
</dbReference>
<dbReference type="GlyCosmos" id="Q5M9B3">
    <property type="glycosylation" value="1 site, No reported glycans"/>
</dbReference>
<dbReference type="DNASU" id="399430"/>
<dbReference type="GeneID" id="399430"/>
<dbReference type="KEGG" id="xla:399430"/>
<dbReference type="AGR" id="Xenbase:XB-GENE-989421"/>
<dbReference type="CTD" id="399430"/>
<dbReference type="Xenbase" id="XB-GENE-989421">
    <property type="gene designation" value="itgbl1.L"/>
</dbReference>
<dbReference type="OrthoDB" id="9930377at2759"/>
<dbReference type="Proteomes" id="UP000186698">
    <property type="component" value="Chromosome 2L"/>
</dbReference>
<dbReference type="Bgee" id="399430">
    <property type="expression patterns" value="Expressed in internal ear and 14 other cell types or tissues"/>
</dbReference>
<dbReference type="GO" id="GO:0009986">
    <property type="term" value="C:cell surface"/>
    <property type="evidence" value="ECO:0000318"/>
    <property type="project" value="GO_Central"/>
</dbReference>
<dbReference type="GO" id="GO:0005576">
    <property type="term" value="C:extracellular region"/>
    <property type="evidence" value="ECO:0007669"/>
    <property type="project" value="UniProtKB-SubCell"/>
</dbReference>
<dbReference type="GO" id="GO:0005925">
    <property type="term" value="C:focal adhesion"/>
    <property type="evidence" value="ECO:0000318"/>
    <property type="project" value="GO_Central"/>
</dbReference>
<dbReference type="GO" id="GO:0008305">
    <property type="term" value="C:integrin complex"/>
    <property type="evidence" value="ECO:0000318"/>
    <property type="project" value="GO_Central"/>
</dbReference>
<dbReference type="GO" id="GO:0005178">
    <property type="term" value="F:integrin binding"/>
    <property type="evidence" value="ECO:0000318"/>
    <property type="project" value="GO_Central"/>
</dbReference>
<dbReference type="GO" id="GO:0033627">
    <property type="term" value="P:cell adhesion mediated by integrin"/>
    <property type="evidence" value="ECO:0000318"/>
    <property type="project" value="GO_Central"/>
</dbReference>
<dbReference type="GO" id="GO:0016477">
    <property type="term" value="P:cell migration"/>
    <property type="evidence" value="ECO:0000318"/>
    <property type="project" value="GO_Central"/>
</dbReference>
<dbReference type="GO" id="GO:0098609">
    <property type="term" value="P:cell-cell adhesion"/>
    <property type="evidence" value="ECO:0000318"/>
    <property type="project" value="GO_Central"/>
</dbReference>
<dbReference type="GO" id="GO:0007160">
    <property type="term" value="P:cell-matrix adhesion"/>
    <property type="evidence" value="ECO:0000318"/>
    <property type="project" value="GO_Central"/>
</dbReference>
<dbReference type="GO" id="GO:0007229">
    <property type="term" value="P:integrin-mediated signaling pathway"/>
    <property type="evidence" value="ECO:0000318"/>
    <property type="project" value="GO_Central"/>
</dbReference>
<dbReference type="FunFam" id="2.10.25.10:FF:000249">
    <property type="entry name" value="Integrin subunit beta like 1"/>
    <property type="match status" value="2"/>
</dbReference>
<dbReference type="FunFam" id="2.10.25.10:FF:000450">
    <property type="entry name" value="Integrin subunit beta like 1"/>
    <property type="match status" value="1"/>
</dbReference>
<dbReference type="FunFam" id="2.10.25.10:FF:000481">
    <property type="entry name" value="Integrin subunit beta like 1"/>
    <property type="match status" value="1"/>
</dbReference>
<dbReference type="FunFam" id="2.10.25.10:FF:000042">
    <property type="entry name" value="Integrin subunit beta-like 1"/>
    <property type="match status" value="4"/>
</dbReference>
<dbReference type="FunFam" id="2.10.25.10:FF:000175">
    <property type="entry name" value="Integrin subunit beta-like 1"/>
    <property type="match status" value="1"/>
</dbReference>
<dbReference type="Gene3D" id="2.10.25.10">
    <property type="entry name" value="Laminin"/>
    <property type="match status" value="10"/>
</dbReference>
<dbReference type="InterPro" id="IPR000742">
    <property type="entry name" value="EGF-like_dom"/>
</dbReference>
<dbReference type="InterPro" id="IPR013111">
    <property type="entry name" value="EGF_extracell"/>
</dbReference>
<dbReference type="InterPro" id="IPR015812">
    <property type="entry name" value="Integrin_bsu"/>
</dbReference>
<dbReference type="PANTHER" id="PTHR10082">
    <property type="entry name" value="INTEGRIN BETA SUBUNIT"/>
    <property type="match status" value="1"/>
</dbReference>
<dbReference type="PANTHER" id="PTHR10082:SF3">
    <property type="entry name" value="INTEGRIN BETA-LIKE PROTEIN 1"/>
    <property type="match status" value="1"/>
</dbReference>
<dbReference type="Pfam" id="PF07974">
    <property type="entry name" value="EGF_2"/>
    <property type="match status" value="5"/>
</dbReference>
<dbReference type="Pfam" id="PF23105">
    <property type="entry name" value="EGF_integrin"/>
    <property type="match status" value="2"/>
</dbReference>
<dbReference type="SMART" id="SM00181">
    <property type="entry name" value="EGF"/>
    <property type="match status" value="5"/>
</dbReference>
<dbReference type="SUPFAM" id="SSF57196">
    <property type="entry name" value="EGF/Laminin"/>
    <property type="match status" value="8"/>
</dbReference>
<dbReference type="PROSITE" id="PS00022">
    <property type="entry name" value="EGF_1"/>
    <property type="match status" value="5"/>
</dbReference>
<dbReference type="PROSITE" id="PS01186">
    <property type="entry name" value="EGF_2"/>
    <property type="match status" value="5"/>
</dbReference>
<dbReference type="PROSITE" id="PS00243">
    <property type="entry name" value="I_EGF_1"/>
    <property type="match status" value="9"/>
</dbReference>
<dbReference type="PROSITE" id="PS52047">
    <property type="entry name" value="I_EGF_2"/>
    <property type="match status" value="10"/>
</dbReference>
<name>ITGBL_XENLA</name>
<evidence type="ECO:0000255" key="1"/>
<evidence type="ECO:0000255" key="2">
    <source>
        <dbReference type="PROSITE-ProRule" id="PRU01392"/>
    </source>
</evidence>
<evidence type="ECO:0000305" key="3"/>
<protein>
    <recommendedName>
        <fullName>Integrin beta-like protein 1</fullName>
    </recommendedName>
</protein>
<proteinExistence type="evidence at transcript level"/>
<organism>
    <name type="scientific">Xenopus laevis</name>
    <name type="common">African clawed frog</name>
    <dbReference type="NCBI Taxonomy" id="8355"/>
    <lineage>
        <taxon>Eukaryota</taxon>
        <taxon>Metazoa</taxon>
        <taxon>Chordata</taxon>
        <taxon>Craniata</taxon>
        <taxon>Vertebrata</taxon>
        <taxon>Euteleostomi</taxon>
        <taxon>Amphibia</taxon>
        <taxon>Batrachia</taxon>
        <taxon>Anura</taxon>
        <taxon>Pipoidea</taxon>
        <taxon>Pipidae</taxon>
        <taxon>Xenopodinae</taxon>
        <taxon>Xenopus</taxon>
        <taxon>Xenopus</taxon>
    </lineage>
</organism>
<sequence length="488" mass="53129">MHAGAFINFVWALSLVSLLAAVPPSPSFSLKNLPSTACRLPPAVSEKRCRTPDGSICSGRGSCDCGICLCEVKEAGKYYGPLCECHDWVCHTYDGQVCAGHGQCDCGVCKCDVGWSGEACQYPTTCDLTRKKSNEMCKNSQAVICSNAGTCQCGRCKCENSDNSGLIYGKYCECDDTECFDDETQEICGGHGKCYCGNCYCEAGWHGDKCEFQCDITPWEIKKRCTSPDGKICSNRGTCVCGECTCHDVDPTGDWGDIHGDTCECDERNCKSVYDRYSDDFCSGHGQCNCGRCDCKDGWTGRKCEHPRACALSIEESKKKCQGSASQPCSGRGKCECGQCTCFPPGDSKVYGKNCECDDRQCEDLEGKICGEHGTCSCGRCICEAGWFGKLCQHERKCNMTEEESKSQCESDDGILCSGKGSCHCGKCICSPQEWYVSGEFCECDDRDCDKHDGLICTGNGICNCGNCECWEGWNGNACEIWLGSEYP</sequence>
<reference key="1">
    <citation type="submission" date="2004-12" db="EMBL/GenBank/DDBJ databases">
        <authorList>
            <consortium name="NIH - Xenopus Gene Collection (XGC) project"/>
        </authorList>
    </citation>
    <scope>NUCLEOTIDE SEQUENCE [LARGE SCALE MRNA]</scope>
    <source>
        <tissue>Embryo</tissue>
        <tissue>Testis</tissue>
    </source>
</reference>
<keyword id="KW-1015">Disulfide bond</keyword>
<keyword id="KW-0245">EGF-like domain</keyword>
<keyword id="KW-0325">Glycoprotein</keyword>
<keyword id="KW-1185">Reference proteome</keyword>
<keyword id="KW-0677">Repeat</keyword>
<keyword id="KW-0964">Secreted</keyword>
<keyword id="KW-0732">Signal</keyword>
<feature type="signal peptide" evidence="1">
    <location>
        <begin position="1"/>
        <end position="21"/>
    </location>
</feature>
<feature type="chain" id="PRO_0000323025" description="Integrin beta-like protein 1">
    <location>
        <begin position="22"/>
        <end position="488"/>
    </location>
</feature>
<feature type="domain" description="I-EGF 1" evidence="2">
    <location>
        <begin position="38"/>
        <end position="84"/>
    </location>
</feature>
<feature type="repeat" description="I">
    <location>
        <begin position="49"/>
        <end position="89"/>
    </location>
</feature>
<feature type="domain" description="I-EGF 2" evidence="2">
    <location>
        <begin position="85"/>
        <end position="121"/>
    </location>
</feature>
<feature type="repeat" description="II">
    <location>
        <begin position="90"/>
        <end position="136"/>
    </location>
</feature>
<feature type="domain" description="I-EGF 3" evidence="2">
    <location>
        <begin position="126"/>
        <end position="173"/>
    </location>
</feature>
<feature type="repeat" description="III">
    <location>
        <begin position="137"/>
        <end position="178"/>
    </location>
</feature>
<feature type="domain" description="I-EGF 4" evidence="2">
    <location>
        <begin position="174"/>
        <end position="211"/>
    </location>
</feature>
<feature type="repeat" description="IV">
    <location>
        <begin position="179"/>
        <end position="224"/>
    </location>
</feature>
<feature type="domain" description="I-EGF 5" evidence="2">
    <location>
        <begin position="214"/>
        <end position="264"/>
    </location>
</feature>
<feature type="repeat" description="V">
    <location>
        <begin position="225"/>
        <end position="269"/>
    </location>
</feature>
<feature type="domain" description="I-EGF 6" evidence="2">
    <location>
        <begin position="265"/>
        <end position="305"/>
    </location>
</feature>
<feature type="repeat" description="VI">
    <location>
        <begin position="270"/>
        <end position="320"/>
    </location>
</feature>
<feature type="domain" description="I-EGF 7" evidence="2">
    <location>
        <begin position="310"/>
        <end position="356"/>
    </location>
</feature>
<feature type="repeat" description="VII">
    <location>
        <begin position="321"/>
        <end position="361"/>
    </location>
</feature>
<feature type="domain" description="I-EGF 8" evidence="2">
    <location>
        <begin position="357"/>
        <end position="393"/>
    </location>
</feature>
<feature type="repeat" description="VIII">
    <location>
        <begin position="362"/>
        <end position="408"/>
    </location>
</feature>
<feature type="domain" description="I-EGF 9" evidence="2">
    <location>
        <begin position="398"/>
        <end position="443"/>
    </location>
</feature>
<feature type="repeat" description="IX">
    <location>
        <begin position="409"/>
        <end position="448"/>
    </location>
</feature>
<feature type="domain" description="I-EGF 10" evidence="2">
    <location>
        <begin position="444"/>
        <end position="480"/>
    </location>
</feature>
<feature type="repeat" description="X">
    <location>
        <begin position="449"/>
        <end position="488"/>
    </location>
</feature>
<feature type="region of interest" description="Cysteine-rich tandem repeats">
    <location>
        <begin position="49"/>
        <end position="488"/>
    </location>
</feature>
<feature type="glycosylation site" description="N-linked (GlcNAc...) asparagine" evidence="1">
    <location>
        <position position="399"/>
    </location>
</feature>
<feature type="disulfide bond" evidence="2">
    <location>
        <begin position="38"/>
        <end position="65"/>
    </location>
</feature>
<feature type="disulfide bond" evidence="2">
    <location>
        <begin position="49"/>
        <end position="63"/>
    </location>
</feature>
<feature type="disulfide bond" evidence="2">
    <location>
        <begin position="57"/>
        <end position="68"/>
    </location>
</feature>
<feature type="disulfide bond" evidence="2">
    <location>
        <begin position="70"/>
        <end position="83"/>
    </location>
</feature>
<feature type="disulfide bond" evidence="2">
    <location>
        <begin position="85"/>
        <end position="106"/>
    </location>
</feature>
<feature type="disulfide bond" evidence="2">
    <location>
        <begin position="90"/>
        <end position="104"/>
    </location>
</feature>
<feature type="disulfide bond" evidence="2">
    <location>
        <begin position="98"/>
        <end position="109"/>
    </location>
</feature>
<feature type="disulfide bond" evidence="2">
    <location>
        <begin position="111"/>
        <end position="120"/>
    </location>
</feature>
<feature type="disulfide bond" evidence="2">
    <location>
        <begin position="126"/>
        <end position="153"/>
    </location>
</feature>
<feature type="disulfide bond" evidence="2">
    <location>
        <begin position="137"/>
        <end position="151"/>
    </location>
</feature>
<feature type="disulfide bond" evidence="2">
    <location>
        <begin position="145"/>
        <end position="156"/>
    </location>
</feature>
<feature type="disulfide bond" evidence="2">
    <location>
        <begin position="158"/>
        <end position="172"/>
    </location>
</feature>
<feature type="disulfide bond" evidence="2">
    <location>
        <begin position="174"/>
        <end position="196"/>
    </location>
</feature>
<feature type="disulfide bond" evidence="2">
    <location>
        <begin position="179"/>
        <end position="194"/>
    </location>
</feature>
<feature type="disulfide bond" evidence="2">
    <location>
        <begin position="188"/>
        <end position="199"/>
    </location>
</feature>
<feature type="disulfide bond" evidence="2">
    <location>
        <begin position="201"/>
        <end position="210"/>
    </location>
</feature>
<feature type="disulfide bond" evidence="2">
    <location>
        <begin position="214"/>
        <end position="241"/>
    </location>
</feature>
<feature type="disulfide bond" evidence="2">
    <location>
        <begin position="225"/>
        <end position="239"/>
    </location>
</feature>
<feature type="disulfide bond" evidence="2">
    <location>
        <begin position="233"/>
        <end position="244"/>
    </location>
</feature>
<feature type="disulfide bond" evidence="2">
    <location>
        <begin position="246"/>
        <end position="263"/>
    </location>
</feature>
<feature type="disulfide bond" evidence="2">
    <location>
        <begin position="265"/>
        <end position="290"/>
    </location>
</feature>
<feature type="disulfide bond" evidence="2">
    <location>
        <begin position="270"/>
        <end position="288"/>
    </location>
</feature>
<feature type="disulfide bond" evidence="2">
    <location>
        <begin position="282"/>
        <end position="293"/>
    </location>
</feature>
<feature type="disulfide bond" evidence="2">
    <location>
        <begin position="295"/>
        <end position="304"/>
    </location>
</feature>
<feature type="disulfide bond" evidence="2">
    <location>
        <begin position="310"/>
        <end position="337"/>
    </location>
</feature>
<feature type="disulfide bond" evidence="2">
    <location>
        <begin position="321"/>
        <end position="335"/>
    </location>
</feature>
<feature type="disulfide bond" evidence="2">
    <location>
        <begin position="329"/>
        <end position="340"/>
    </location>
</feature>
<feature type="disulfide bond" evidence="2">
    <location>
        <begin position="342"/>
        <end position="355"/>
    </location>
</feature>
<feature type="disulfide bond" evidence="2">
    <location>
        <begin position="357"/>
        <end position="378"/>
    </location>
</feature>
<feature type="disulfide bond" evidence="2">
    <location>
        <begin position="362"/>
        <end position="376"/>
    </location>
</feature>
<feature type="disulfide bond" evidence="2">
    <location>
        <begin position="370"/>
        <end position="381"/>
    </location>
</feature>
<feature type="disulfide bond" evidence="2">
    <location>
        <begin position="383"/>
        <end position="392"/>
    </location>
</feature>
<feature type="disulfide bond" evidence="2">
    <location>
        <begin position="398"/>
        <end position="425"/>
    </location>
</feature>
<feature type="disulfide bond" evidence="2">
    <location>
        <begin position="409"/>
        <end position="423"/>
    </location>
</feature>
<feature type="disulfide bond" evidence="2">
    <location>
        <begin position="417"/>
        <end position="428"/>
    </location>
</feature>
<feature type="disulfide bond" evidence="2">
    <location>
        <begin position="430"/>
        <end position="442"/>
    </location>
</feature>
<feature type="disulfide bond" evidence="2">
    <location>
        <begin position="444"/>
        <end position="465"/>
    </location>
</feature>
<feature type="disulfide bond" evidence="2">
    <location>
        <begin position="449"/>
        <end position="463"/>
    </location>
</feature>
<feature type="disulfide bond" evidence="2">
    <location>
        <begin position="457"/>
        <end position="468"/>
    </location>
</feature>
<feature type="disulfide bond" evidence="2">
    <location>
        <begin position="470"/>
        <end position="479"/>
    </location>
</feature>
<accession>Q5M9B3</accession>
<accession>Q7ZTJ2</accession>
<comment type="subcellular location">
    <subcellularLocation>
        <location evidence="3">Secreted</location>
    </subcellularLocation>
</comment>
<comment type="domain">
    <text>Contains ten tandem EGF-like repeats strikingly similar to those found in the cysteine rich 'stalk-like' structure of integrin beta-subunits.</text>
</comment>
<comment type="sequence caution" evidence="3">
    <conflict type="erroneous initiation">
        <sequence resource="EMBL-CDS" id="AAH46744"/>
    </conflict>
</comment>